<proteinExistence type="evidence at protein level"/>
<name>AB9A_ARATH</name>
<dbReference type="EMBL" id="AB010069">
    <property type="protein sequence ID" value="BAB10073.1"/>
    <property type="molecule type" value="Genomic_DNA"/>
</dbReference>
<dbReference type="EMBL" id="CP002688">
    <property type="protein sequence ID" value="AED97510.1"/>
    <property type="status" value="ALT_SEQ"/>
    <property type="molecule type" value="Genomic_DNA"/>
</dbReference>
<dbReference type="EMBL" id="CP002688">
    <property type="protein sequence ID" value="ANM69292.1"/>
    <property type="molecule type" value="Genomic_DNA"/>
</dbReference>
<dbReference type="RefSeq" id="NP_001330984.1">
    <property type="nucleotide sequence ID" value="NM_001345493.1"/>
</dbReference>
<dbReference type="RefSeq" id="NP_200981.1">
    <property type="nucleotide sequence ID" value="NM_125567.2"/>
</dbReference>
<dbReference type="SMR" id="Q9FLT5"/>
<dbReference type="FunCoup" id="Q9FLT5">
    <property type="interactions" value="2"/>
</dbReference>
<dbReference type="STRING" id="3702.Q9FLT5"/>
<dbReference type="TCDB" id="3.A.1.211.20">
    <property type="family name" value="the atp-binding cassette (abc) superfamily"/>
</dbReference>
<dbReference type="iPTMnet" id="Q9FLT5"/>
<dbReference type="PaxDb" id="3702-AT5G61730.1"/>
<dbReference type="ProteomicsDB" id="244532"/>
<dbReference type="EnsemblPlants" id="AT5G61730.2">
    <property type="protein sequence ID" value="AT5G61730.2"/>
    <property type="gene ID" value="AT5G61730"/>
</dbReference>
<dbReference type="GeneID" id="836295"/>
<dbReference type="Gramene" id="AT5G61730.2">
    <property type="protein sequence ID" value="AT5G61730.2"/>
    <property type="gene ID" value="AT5G61730"/>
</dbReference>
<dbReference type="KEGG" id="ath:AT5G61730"/>
<dbReference type="Araport" id="AT5G61730"/>
<dbReference type="TAIR" id="AT5G61730">
    <property type="gene designation" value="ABCA9"/>
</dbReference>
<dbReference type="eggNOG" id="KOG0059">
    <property type="taxonomic scope" value="Eukaryota"/>
</dbReference>
<dbReference type="HOGENOM" id="CLU_000604_19_5_1"/>
<dbReference type="InParanoid" id="Q9FLT5"/>
<dbReference type="PRO" id="PR:Q9FLT5"/>
<dbReference type="Proteomes" id="UP000006548">
    <property type="component" value="Chromosome 5"/>
</dbReference>
<dbReference type="ExpressionAtlas" id="Q9FLT5">
    <property type="expression patterns" value="baseline and differential"/>
</dbReference>
<dbReference type="GO" id="GO:0005783">
    <property type="term" value="C:endoplasmic reticulum"/>
    <property type="evidence" value="ECO:0000314"/>
    <property type="project" value="UniProtKB"/>
</dbReference>
<dbReference type="GO" id="GO:0005789">
    <property type="term" value="C:endoplasmic reticulum membrane"/>
    <property type="evidence" value="ECO:0007669"/>
    <property type="project" value="UniProtKB-SubCell"/>
</dbReference>
<dbReference type="GO" id="GO:0140359">
    <property type="term" value="F:ABC-type transporter activity"/>
    <property type="evidence" value="ECO:0007669"/>
    <property type="project" value="InterPro"/>
</dbReference>
<dbReference type="GO" id="GO:0005524">
    <property type="term" value="F:ATP binding"/>
    <property type="evidence" value="ECO:0007669"/>
    <property type="project" value="UniProtKB-KW"/>
</dbReference>
<dbReference type="GO" id="GO:0016887">
    <property type="term" value="F:ATP hydrolysis activity"/>
    <property type="evidence" value="ECO:0007669"/>
    <property type="project" value="InterPro"/>
</dbReference>
<dbReference type="GO" id="GO:0015245">
    <property type="term" value="F:fatty acid transmembrane transporter activity"/>
    <property type="evidence" value="ECO:0000314"/>
    <property type="project" value="UniProtKB"/>
</dbReference>
<dbReference type="GO" id="GO:0048316">
    <property type="term" value="P:seed development"/>
    <property type="evidence" value="ECO:0000315"/>
    <property type="project" value="UniProtKB"/>
</dbReference>
<dbReference type="CDD" id="cd03263">
    <property type="entry name" value="ABC_subfamily_A"/>
    <property type="match status" value="1"/>
</dbReference>
<dbReference type="FunFam" id="3.40.50.300:FF:000665">
    <property type="entry name" value="ABC transporter A family member 2"/>
    <property type="match status" value="1"/>
</dbReference>
<dbReference type="Gene3D" id="3.40.50.300">
    <property type="entry name" value="P-loop containing nucleotide triphosphate hydrolases"/>
    <property type="match status" value="1"/>
</dbReference>
<dbReference type="InterPro" id="IPR003593">
    <property type="entry name" value="AAA+_ATPase"/>
</dbReference>
<dbReference type="InterPro" id="IPR013525">
    <property type="entry name" value="ABC2_TM"/>
</dbReference>
<dbReference type="InterPro" id="IPR003439">
    <property type="entry name" value="ABC_transporter-like_ATP-bd"/>
</dbReference>
<dbReference type="InterPro" id="IPR017871">
    <property type="entry name" value="ABC_transporter-like_CS"/>
</dbReference>
<dbReference type="InterPro" id="IPR026082">
    <property type="entry name" value="ABCA"/>
</dbReference>
<dbReference type="InterPro" id="IPR056788">
    <property type="entry name" value="ABCA2/9/11_C"/>
</dbReference>
<dbReference type="InterPro" id="IPR027417">
    <property type="entry name" value="P-loop_NTPase"/>
</dbReference>
<dbReference type="PANTHER" id="PTHR19229:SF207">
    <property type="entry name" value="ABC TRANSPORTER A FAMILY MEMBER 11-RELATED"/>
    <property type="match status" value="1"/>
</dbReference>
<dbReference type="PANTHER" id="PTHR19229">
    <property type="entry name" value="ATP-BINDING CASSETTE TRANSPORTER SUBFAMILY A ABCA"/>
    <property type="match status" value="1"/>
</dbReference>
<dbReference type="Pfam" id="PF12698">
    <property type="entry name" value="ABC2_membrane_3"/>
    <property type="match status" value="1"/>
</dbReference>
<dbReference type="Pfam" id="PF00005">
    <property type="entry name" value="ABC_tran"/>
    <property type="match status" value="1"/>
</dbReference>
<dbReference type="Pfam" id="PF25158">
    <property type="entry name" value="ABCA11_C"/>
    <property type="match status" value="1"/>
</dbReference>
<dbReference type="SMART" id="SM00382">
    <property type="entry name" value="AAA"/>
    <property type="match status" value="1"/>
</dbReference>
<dbReference type="SUPFAM" id="SSF52540">
    <property type="entry name" value="P-loop containing nucleoside triphosphate hydrolases"/>
    <property type="match status" value="1"/>
</dbReference>
<dbReference type="PROSITE" id="PS00211">
    <property type="entry name" value="ABC_TRANSPORTER_1"/>
    <property type="match status" value="1"/>
</dbReference>
<dbReference type="PROSITE" id="PS50893">
    <property type="entry name" value="ABC_TRANSPORTER_2"/>
    <property type="match status" value="1"/>
</dbReference>
<comment type="function">
    <text evidence="3">Mediates the transport of acyl-CoAs and/or free fatty acids to the endoplasmic reticulum. Has no effect on the selectivity of fatty acid incorporation into triacylglycerol or further desaturation steps.</text>
</comment>
<comment type="subcellular location">
    <subcellularLocation>
        <location evidence="3">Endoplasmic reticulum membrane</location>
        <topology evidence="3">Multi-pass membrane protein</topology>
    </subcellularLocation>
</comment>
<comment type="tissue specificity">
    <text evidence="3">Highly expressed in siliques. Detected in seedlings, rosette leaves, stems and flowers.</text>
</comment>
<comment type="developmental stage">
    <text evidence="3">Expressed during the middle and late stages of seed development.</text>
</comment>
<comment type="disruption phenotype">
    <text evidence="3">Reduced seed size with abnormal morphology and reduced triacylglycerol content. Retarded growth on medium lacking sucrose.</text>
</comment>
<comment type="biotechnology">
    <text evidence="3">Overexpression of ABCA9 increases seed oil content.</text>
</comment>
<comment type="similarity">
    <text evidence="4">Belongs to the ABC transporter superfamily. ABCA family. CPR flippase (TC 3.A.1.211) subfamily.</text>
</comment>
<comment type="sequence caution" evidence="4">
    <conflict type="erroneous gene model prediction">
        <sequence resource="EMBL-CDS" id="AED97510"/>
    </conflict>
</comment>
<keyword id="KW-0067">ATP-binding</keyword>
<keyword id="KW-0256">Endoplasmic reticulum</keyword>
<keyword id="KW-0445">Lipid transport</keyword>
<keyword id="KW-0472">Membrane</keyword>
<keyword id="KW-0547">Nucleotide-binding</keyword>
<keyword id="KW-1185">Reference proteome</keyword>
<keyword id="KW-0812">Transmembrane</keyword>
<keyword id="KW-1133">Transmembrane helix</keyword>
<keyword id="KW-0813">Transport</keyword>
<accession>Q9FLT5</accession>
<accession>F4K3L7</accession>
<organism>
    <name type="scientific">Arabidopsis thaliana</name>
    <name type="common">Mouse-ear cress</name>
    <dbReference type="NCBI Taxonomy" id="3702"/>
    <lineage>
        <taxon>Eukaryota</taxon>
        <taxon>Viridiplantae</taxon>
        <taxon>Streptophyta</taxon>
        <taxon>Embryophyta</taxon>
        <taxon>Tracheophyta</taxon>
        <taxon>Spermatophyta</taxon>
        <taxon>Magnoliopsida</taxon>
        <taxon>eudicotyledons</taxon>
        <taxon>Gunneridae</taxon>
        <taxon>Pentapetalae</taxon>
        <taxon>rosids</taxon>
        <taxon>malvids</taxon>
        <taxon>Brassicales</taxon>
        <taxon>Brassicaceae</taxon>
        <taxon>Camelineae</taxon>
        <taxon>Arabidopsis</taxon>
    </lineage>
</organism>
<sequence length="950" mass="105431">MTLREGLPLFHQQFTALFKKNLLLSWRNKRATCLHLFSSFFFILLIFSIEESSKASDLTSTRHKNVTDPKALVSLPILPCEDKFFVRLPCFDFVWSGNQSRRVTDIVSAIMANNPGRPIPTNKVQSFTKPEEVDAWFMSHPSQVTGALHFVEKNATVISYGIQTNSSSEKKRGRREDPTFKFLVPLQIAAEREIARSLIGDPKFSWDFGFKEFARPAIGGEVIISAFYLMGPVFFLAFSMFGFVLQLGSVVTEKELKLREAMTTMGVYESAYWLSWLIWEGILTFVSSLFLVLFGMMFQFEFFLKNSFVLVFLLFFLFQFNMIGLAFALSSIISKSSSATTVGFLVFLVGFITQIVTTAGFPYSSAYSIGSRVIWSLFPPNTFSAGLQLLLEATSSPGDSGISWSERAICAGGESTCVITTNKIYIWLVGTFFFWFVLALYFDNIIPNASGVRKSIFYFLKPSYWTGKEGNKVEEGSICSCIGSVPPVEHITPEDEDVLEEEILVKQQAMDGRVDPNIAVQIHGLAKTYPGTTKLGCCKCTKTSPFHAVKGLWMNIAKDQLFCLLGPNGAGKTTTISCLTGINPVTGGDAKIYGNSIRSSVGMSNIRKMIGVCPQFDILWDALSSEEHLHLFASIKGLPPSSIKSIAEKLLVDVKLTGSAKIRAGSYSGGMKRRLSVAIALIGDPKLVFLDEPTTGMDPITRRHVWDIIQESKKGRAIILTTHSMEEADILSDRIGIMAKGRLRCIGTSIRLKSRFGTGFVATVSFIENKKDGAPEPLKRFFKERLKVEPTEENKAFMTFVIPHDKEQLLKGFFAELQDRESEFGIADIQLGLATLEEVFLNIARRAELESATVEGTMVTLELESGIAVEIPVGARFVGIPGTENAENPRGLMVEVYWQQDGSGSMCISGHSAEMRIPENVSVIYEPSSQVLGHGQRRVRGIVIDYESNN</sequence>
<feature type="chain" id="PRO_0000240330" description="ABC transporter A family member 9">
    <location>
        <begin position="1"/>
        <end position="950"/>
    </location>
</feature>
<feature type="transmembrane region" description="Helical" evidence="1">
    <location>
        <begin position="31"/>
        <end position="51"/>
    </location>
</feature>
<feature type="transmembrane region" description="Helical" evidence="1">
    <location>
        <begin position="223"/>
        <end position="243"/>
    </location>
</feature>
<feature type="transmembrane region" description="Helical" evidence="1">
    <location>
        <begin position="276"/>
        <end position="296"/>
    </location>
</feature>
<feature type="transmembrane region" description="Helical" evidence="1">
    <location>
        <begin position="308"/>
        <end position="328"/>
    </location>
</feature>
<feature type="transmembrane region" description="Helical" evidence="1">
    <location>
        <begin position="342"/>
        <end position="362"/>
    </location>
</feature>
<feature type="transmembrane region" description="Helical" evidence="1">
    <location>
        <begin position="426"/>
        <end position="446"/>
    </location>
</feature>
<feature type="domain" description="ABC transporter" evidence="2">
    <location>
        <begin position="520"/>
        <end position="765"/>
    </location>
</feature>
<feature type="binding site" evidence="2">
    <location>
        <begin position="566"/>
        <end position="573"/>
    </location>
    <ligand>
        <name>ATP</name>
        <dbReference type="ChEBI" id="CHEBI:30616"/>
    </ligand>
</feature>
<protein>
    <recommendedName>
        <fullName>ABC transporter A family member 9</fullName>
        <shortName>ABC transporter ABCA.9</shortName>
        <shortName>AtABCA9</shortName>
    </recommendedName>
    <alternativeName>
        <fullName>ABC2 homolog 11</fullName>
    </alternativeName>
</protein>
<gene>
    <name type="primary">ABCA9</name>
    <name type="synonym">ATH11</name>
    <name type="ordered locus">At5g61730</name>
    <name type="ORF">MAC9.4</name>
</gene>
<reference key="1">
    <citation type="journal article" date="1998" name="DNA Res.">
        <title>Structural analysis of Arabidopsis thaliana chromosome 5. IV. Sequence features of the regions of 1,456,315 bp covered by nineteen physically assigned P1 and TAC clones.</title>
        <authorList>
            <person name="Sato S."/>
            <person name="Kaneko T."/>
            <person name="Kotani H."/>
            <person name="Nakamura Y."/>
            <person name="Asamizu E."/>
            <person name="Miyajima N."/>
            <person name="Tabata S."/>
        </authorList>
    </citation>
    <scope>NUCLEOTIDE SEQUENCE [LARGE SCALE GENOMIC DNA]</scope>
    <source>
        <strain>cv. Columbia</strain>
    </source>
</reference>
<reference key="2">
    <citation type="journal article" date="2017" name="Plant J.">
        <title>Araport11: a complete reannotation of the Arabidopsis thaliana reference genome.</title>
        <authorList>
            <person name="Cheng C.Y."/>
            <person name="Krishnakumar V."/>
            <person name="Chan A.P."/>
            <person name="Thibaud-Nissen F."/>
            <person name="Schobel S."/>
            <person name="Town C.D."/>
        </authorList>
    </citation>
    <scope>GENOME REANNOTATION</scope>
    <source>
        <strain>cv. Columbia</strain>
    </source>
</reference>
<reference key="3">
    <citation type="journal article" date="2001" name="J. Biol. Chem.">
        <title>The Arabidopsis thaliana ABC protein superfamily, a complete inventory.</title>
        <authorList>
            <person name="Sanchez-Fernandez R."/>
            <person name="Davies T.G."/>
            <person name="Coleman J.O."/>
            <person name="Rea P.A."/>
        </authorList>
    </citation>
    <scope>GENE FAMILY</scope>
    <scope>NOMENCLATURE</scope>
</reference>
<reference key="4">
    <citation type="journal article" date="2008" name="Trends Plant Sci.">
        <title>Plant ABC proteins - a unified nomenclature and updated inventory.</title>
        <authorList>
            <person name="Verrier P.J."/>
            <person name="Bird D."/>
            <person name="Burla B."/>
            <person name="Dassa E."/>
            <person name="Forestier C."/>
            <person name="Geisler M."/>
            <person name="Klein M."/>
            <person name="Kolukisaoglu H.U."/>
            <person name="Lee Y."/>
            <person name="Martinoia E."/>
            <person name="Murphy A."/>
            <person name="Rea P.A."/>
            <person name="Samuels L."/>
            <person name="Schulz B."/>
            <person name="Spalding E.J."/>
            <person name="Yazaki K."/>
            <person name="Theodoulou F.L."/>
        </authorList>
    </citation>
    <scope>GENE FAMILY</scope>
    <scope>NOMENCLATURE</scope>
</reference>
<reference key="5">
    <citation type="journal article" date="2013" name="Proc. Natl. Acad. Sci. U.S.A.">
        <title>AtABCA9 transporter supplies fatty acids for lipid synthesis to the endoplasmic reticulum.</title>
        <authorList>
            <person name="Kim S."/>
            <person name="Yamaoka Y."/>
            <person name="Ono H."/>
            <person name="Kim H."/>
            <person name="Shim D."/>
            <person name="Maeshima M."/>
            <person name="Martinoia E."/>
            <person name="Cahoon E.B."/>
            <person name="Nishida I."/>
            <person name="Lee Y."/>
        </authorList>
    </citation>
    <scope>FUNCTION</scope>
    <scope>SUBCELLULAR LOCATION</scope>
    <scope>DISRUPTION PHENOTYPE</scope>
    <scope>BIOTECHNOLOGY</scope>
    <scope>TISSUE SPECIFICITY</scope>
    <scope>DEVELOPMENTAL STAGE</scope>
</reference>
<evidence type="ECO:0000255" key="1"/>
<evidence type="ECO:0000255" key="2">
    <source>
        <dbReference type="PROSITE-ProRule" id="PRU00434"/>
    </source>
</evidence>
<evidence type="ECO:0000269" key="3">
    <source>
    </source>
</evidence>
<evidence type="ECO:0000305" key="4"/>